<proteinExistence type="evidence at protein level"/>
<evidence type="ECO:0000250" key="1"/>
<evidence type="ECO:0000255" key="2"/>
<evidence type="ECO:0000255" key="3">
    <source>
        <dbReference type="PROSITE-ProRule" id="PRU01185"/>
    </source>
</evidence>
<evidence type="ECO:0000269" key="4">
    <source>
    </source>
</evidence>
<evidence type="ECO:0000269" key="5">
    <source>
    </source>
</evidence>
<evidence type="ECO:0000269" key="6">
    <source>
    </source>
</evidence>
<evidence type="ECO:0000305" key="7"/>
<organism>
    <name type="scientific">Arabidopsis thaliana</name>
    <name type="common">Mouse-ear cress</name>
    <dbReference type="NCBI Taxonomy" id="3702"/>
    <lineage>
        <taxon>Eukaryota</taxon>
        <taxon>Viridiplantae</taxon>
        <taxon>Streptophyta</taxon>
        <taxon>Embryophyta</taxon>
        <taxon>Tracheophyta</taxon>
        <taxon>Spermatophyta</taxon>
        <taxon>Magnoliopsida</taxon>
        <taxon>eudicotyledons</taxon>
        <taxon>Gunneridae</taxon>
        <taxon>Pentapetalae</taxon>
        <taxon>rosids</taxon>
        <taxon>malvids</taxon>
        <taxon>Brassicales</taxon>
        <taxon>Brassicaceae</taxon>
        <taxon>Camelineae</taxon>
        <taxon>Arabidopsis</taxon>
    </lineage>
</organism>
<protein>
    <recommendedName>
        <fullName>26S proteasome non-ATPase regulatory subunit 12 homolog B</fullName>
    </recommendedName>
    <alternativeName>
        <fullName>26S proteasome regulatory subunit RPN5b</fullName>
        <shortName>AtRPN5b</shortName>
    </alternativeName>
    <alternativeName>
        <fullName>26S proteasome regulatory subunit p55 homolog B</fullName>
    </alternativeName>
</protein>
<keyword id="KW-0025">Alternative splicing</keyword>
<keyword id="KW-0175">Coiled coil</keyword>
<keyword id="KW-0963">Cytoplasm</keyword>
<keyword id="KW-0539">Nucleus</keyword>
<keyword id="KW-0647">Proteasome</keyword>
<keyword id="KW-1185">Reference proteome</keyword>
<feature type="chain" id="PRO_0000423172" description="26S proteasome non-ATPase regulatory subunit 12 homolog B">
    <location>
        <begin position="1"/>
        <end position="442"/>
    </location>
</feature>
<feature type="domain" description="PCI" evidence="3">
    <location>
        <begin position="232"/>
        <end position="403"/>
    </location>
</feature>
<feature type="coiled-coil region" evidence="2">
    <location>
        <begin position="1"/>
        <end position="129"/>
    </location>
</feature>
<sequence>MEESRQLESSIDRLLNEEKQMRLAENVAGTRKAATEILKLCFEAKDWKLLNEQILNLSKKRGQLKQAVQSMVQQAMQYIDQTLDIETRIELIKTLNNVAAGKIYVEIERARLTKMLAKIKEEQGLIAEAADLMQEVAVETFGAMAKTEKIAFILEQVRLCLDQKDFVRAQILSRKINPRVFDADTTKEKKKPKEGENMVEEAPADIPTLLVLKRIYYELMIRYYSHNNEYIEICRSYKAIYDIPSVKENPEQWIPVLRKICWFLALAPHDPMQSSLLNATLEDKKLSEIPDFKMLLKQIVTMEVIQWTSLWNKYKDEFENEKNMIGGSLGDKAGEDLKLRIIEHNILVVSKYYSRITFKRLAELLCLTTEEAEKHLSEMVVSKALIAKIDRPSGIICFQIVKDSNEILNSWATNLEKLLDLVEKSCHQIHKETMVHKVALRA</sequence>
<dbReference type="EMBL" id="AY230833">
    <property type="protein sequence ID" value="AAP86660.1"/>
    <property type="molecule type" value="mRNA"/>
</dbReference>
<dbReference type="EMBL" id="AB025637">
    <property type="protein sequence ID" value="BAB10309.1"/>
    <property type="status" value="ALT_SEQ"/>
    <property type="molecule type" value="Genomic_DNA"/>
</dbReference>
<dbReference type="EMBL" id="CP002688">
    <property type="protein sequence ID" value="AED97947.1"/>
    <property type="molecule type" value="Genomic_DNA"/>
</dbReference>
<dbReference type="EMBL" id="AY062093">
    <property type="protein sequence ID" value="AAL32972.1"/>
    <property type="molecule type" value="mRNA"/>
</dbReference>
<dbReference type="EMBL" id="AY062113">
    <property type="protein sequence ID" value="AAL32985.1"/>
    <property type="molecule type" value="mRNA"/>
</dbReference>
<dbReference type="EMBL" id="AY124872">
    <property type="protein sequence ID" value="AAM70581.1"/>
    <property type="molecule type" value="mRNA"/>
</dbReference>
<dbReference type="RefSeq" id="NP_568994.2">
    <molecule id="Q8VWK0-1"/>
    <property type="nucleotide sequence ID" value="NM_125872.4"/>
</dbReference>
<dbReference type="SMR" id="Q8VWK0"/>
<dbReference type="BioGRID" id="21839">
    <property type="interactions" value="103"/>
</dbReference>
<dbReference type="FunCoup" id="Q8VWK0">
    <property type="interactions" value="4690"/>
</dbReference>
<dbReference type="IntAct" id="Q8VWK0">
    <property type="interactions" value="1"/>
</dbReference>
<dbReference type="STRING" id="3702.Q8VWK0"/>
<dbReference type="PaxDb" id="3702-AT5G64760.1"/>
<dbReference type="ProteomicsDB" id="226300">
    <molecule id="Q8VWK0-1"/>
</dbReference>
<dbReference type="EnsemblPlants" id="AT5G64760.1">
    <molecule id="Q8VWK0-1"/>
    <property type="protein sequence ID" value="AT5G64760.1"/>
    <property type="gene ID" value="AT5G64760"/>
</dbReference>
<dbReference type="GeneID" id="836597"/>
<dbReference type="Gramene" id="AT5G64760.1">
    <molecule id="Q8VWK0-1"/>
    <property type="protein sequence ID" value="AT5G64760.1"/>
    <property type="gene ID" value="AT5G64760"/>
</dbReference>
<dbReference type="KEGG" id="ath:AT5G64760"/>
<dbReference type="Araport" id="AT5G64760"/>
<dbReference type="TAIR" id="AT5G64760">
    <property type="gene designation" value="RPN5B"/>
</dbReference>
<dbReference type="eggNOG" id="KOG1498">
    <property type="taxonomic scope" value="Eukaryota"/>
</dbReference>
<dbReference type="HOGENOM" id="CLU_033860_1_0_1"/>
<dbReference type="InParanoid" id="Q8VWK0"/>
<dbReference type="PRO" id="PR:Q8VWK0"/>
<dbReference type="Proteomes" id="UP000006548">
    <property type="component" value="Chromosome 5"/>
</dbReference>
<dbReference type="ExpressionAtlas" id="Q8VWK0">
    <property type="expression patterns" value="baseline and differential"/>
</dbReference>
<dbReference type="GO" id="GO:0005737">
    <property type="term" value="C:cytoplasm"/>
    <property type="evidence" value="ECO:0000314"/>
    <property type="project" value="TAIR"/>
</dbReference>
<dbReference type="GO" id="GO:0005634">
    <property type="term" value="C:nucleus"/>
    <property type="evidence" value="ECO:0000314"/>
    <property type="project" value="TAIR"/>
</dbReference>
<dbReference type="GO" id="GO:0000502">
    <property type="term" value="C:proteasome complex"/>
    <property type="evidence" value="ECO:0000314"/>
    <property type="project" value="TAIR"/>
</dbReference>
<dbReference type="GO" id="GO:0030163">
    <property type="term" value="P:protein catabolic process"/>
    <property type="evidence" value="ECO:0000304"/>
    <property type="project" value="TAIR"/>
</dbReference>
<dbReference type="FunFam" id="1.10.10.10:FF:000070">
    <property type="entry name" value="26S proteasome non-ATPase regulatory subunit 12"/>
    <property type="match status" value="1"/>
</dbReference>
<dbReference type="Gene3D" id="1.10.10.10">
    <property type="entry name" value="Winged helix-like DNA-binding domain superfamily/Winged helix DNA-binding domain"/>
    <property type="match status" value="1"/>
</dbReference>
<dbReference type="InterPro" id="IPR000717">
    <property type="entry name" value="PCI_dom"/>
</dbReference>
<dbReference type="InterPro" id="IPR054559">
    <property type="entry name" value="PSMD12-CSN4-like_N"/>
</dbReference>
<dbReference type="InterPro" id="IPR040134">
    <property type="entry name" value="PSMD12/CSN4"/>
</dbReference>
<dbReference type="InterPro" id="IPR040896">
    <property type="entry name" value="RPN5_C"/>
</dbReference>
<dbReference type="InterPro" id="IPR036388">
    <property type="entry name" value="WH-like_DNA-bd_sf"/>
</dbReference>
<dbReference type="InterPro" id="IPR036390">
    <property type="entry name" value="WH_DNA-bd_sf"/>
</dbReference>
<dbReference type="PANTHER" id="PTHR10855:SF1">
    <property type="entry name" value="26S PROTEASOME NON-ATPASE REGULATORY SUBUNIT 12"/>
    <property type="match status" value="1"/>
</dbReference>
<dbReference type="PANTHER" id="PTHR10855">
    <property type="entry name" value="26S PROTEASOME NON-ATPASE REGULATORY SUBUNIT 12/COP9 SIGNALOSOME COMPLEX SUBUNIT 4"/>
    <property type="match status" value="1"/>
</dbReference>
<dbReference type="Pfam" id="PF01399">
    <property type="entry name" value="PCI"/>
    <property type="match status" value="1"/>
</dbReference>
<dbReference type="Pfam" id="PF22241">
    <property type="entry name" value="PSMD12-CSN4_N"/>
    <property type="match status" value="2"/>
</dbReference>
<dbReference type="Pfam" id="PF18098">
    <property type="entry name" value="RPN5_C"/>
    <property type="match status" value="1"/>
</dbReference>
<dbReference type="SMART" id="SM00088">
    <property type="entry name" value="PINT"/>
    <property type="match status" value="1"/>
</dbReference>
<dbReference type="SUPFAM" id="SSF46785">
    <property type="entry name" value="Winged helix' DNA-binding domain"/>
    <property type="match status" value="1"/>
</dbReference>
<dbReference type="PROSITE" id="PS50250">
    <property type="entry name" value="PCI"/>
    <property type="match status" value="1"/>
</dbReference>
<name>PS12B_ARATH</name>
<accession>Q8VWK0</accession>
<accession>Q9FGF7</accession>
<comment type="function">
    <text evidence="1 5">Acts as a regulatory subunit of the 26 proteasome which is involved in the ATP-dependent degradation of ubiquitinated proteins (By similarity). Acts redundantly with RPN5A.</text>
</comment>
<comment type="subunit">
    <text evidence="4 6">Component of the 19S regulatory particle (RP/PA700) lid subcomplex of the 26S proteasome. The 26S proteasome is composed of a core protease (CP), known as the 20S proteasome, capped at one or both ends by the 19S regulatory particle (RP/PA700). The RP/PA700 complex is composed of at least 17 different subunits in two subcomplexes, the base and the lid, which form the portions proximal and distal to the 20S proteolytic core, respectively.</text>
</comment>
<comment type="subcellular location">
    <subcellularLocation>
        <location evidence="5">Cytoplasm</location>
    </subcellularLocation>
    <subcellularLocation>
        <location evidence="5">Nucleus</location>
    </subcellularLocation>
</comment>
<comment type="alternative products">
    <event type="alternative splicing"/>
    <isoform>
        <id>Q8VWK0-1</id>
        <name>1</name>
        <sequence type="displayed"/>
    </isoform>
    <text>A number of isoforms are produced. According to EST sequences.</text>
</comment>
<comment type="tissue specificity">
    <text evidence="4">Ubiquitous with highest expression in flowers.</text>
</comment>
<comment type="disruption phenotype">
    <text evidence="5">No visible phenotype.</text>
</comment>
<comment type="similarity">
    <text evidence="7">Belongs to the proteasome subunit p55 family.</text>
</comment>
<comment type="sequence caution" evidence="7">
    <conflict type="erroneous gene model prediction">
        <sequence resource="EMBL-CDS" id="BAB10309"/>
    </conflict>
</comment>
<gene>
    <name type="primary">RPN5B</name>
    <name type="ordered locus">At5g64760</name>
    <name type="ORF">MVP7.9</name>
</gene>
<reference key="1">
    <citation type="journal article" date="2004" name="J. Biol. Chem.">
        <title>Purification of the Arabidopsis 26 S proteasome: biochemical and molecular analyses revealed the presence of multiple isoforms.</title>
        <authorList>
            <person name="Yang P."/>
            <person name="Fu H."/>
            <person name="Walker J."/>
            <person name="Papa C.M."/>
            <person name="Smalle J."/>
            <person name="Ju Y.-M."/>
            <person name="Vierstra R.D."/>
        </authorList>
    </citation>
    <scope>NUCLEOTIDE SEQUENCE [MRNA]</scope>
    <scope>SUBUNIT</scope>
    <scope>IDENTIFICATION BY MASS SPECTROMETRY</scope>
    <scope>TISSUE SPECIFICITY</scope>
    <source>
        <strain>cv. Columbia</strain>
    </source>
</reference>
<reference key="2">
    <citation type="submission" date="1999-04" db="EMBL/GenBank/DDBJ databases">
        <title>Structural analysis of Arabidopsis thaliana chromosome 5. XI.</title>
        <authorList>
            <person name="Kaneko T."/>
            <person name="Katoh T."/>
            <person name="Asamizu E."/>
            <person name="Sato S."/>
            <person name="Nakamura Y."/>
            <person name="Kotani H."/>
            <person name="Tabata S."/>
        </authorList>
    </citation>
    <scope>NUCLEOTIDE SEQUENCE [LARGE SCALE GENOMIC DNA]</scope>
    <source>
        <strain>cv. Columbia</strain>
    </source>
</reference>
<reference key="3">
    <citation type="journal article" date="2017" name="Plant J.">
        <title>Araport11: a complete reannotation of the Arabidopsis thaliana reference genome.</title>
        <authorList>
            <person name="Cheng C.Y."/>
            <person name="Krishnakumar V."/>
            <person name="Chan A.P."/>
            <person name="Thibaud-Nissen F."/>
            <person name="Schobel S."/>
            <person name="Town C.D."/>
        </authorList>
    </citation>
    <scope>GENOME REANNOTATION</scope>
    <source>
        <strain>cv. Columbia</strain>
    </source>
</reference>
<reference key="4">
    <citation type="journal article" date="2003" name="Science">
        <title>Empirical analysis of transcriptional activity in the Arabidopsis genome.</title>
        <authorList>
            <person name="Yamada K."/>
            <person name="Lim J."/>
            <person name="Dale J.M."/>
            <person name="Chen H."/>
            <person name="Shinn P."/>
            <person name="Palm C.J."/>
            <person name="Southwick A.M."/>
            <person name="Wu H.C."/>
            <person name="Kim C.J."/>
            <person name="Nguyen M."/>
            <person name="Pham P.K."/>
            <person name="Cheuk R.F."/>
            <person name="Karlin-Newmann G."/>
            <person name="Liu S.X."/>
            <person name="Lam B."/>
            <person name="Sakano H."/>
            <person name="Wu T."/>
            <person name="Yu G."/>
            <person name="Miranda M."/>
            <person name="Quach H.L."/>
            <person name="Tripp M."/>
            <person name="Chang C.H."/>
            <person name="Lee J.M."/>
            <person name="Toriumi M.J."/>
            <person name="Chan M.M."/>
            <person name="Tang C.C."/>
            <person name="Onodera C.S."/>
            <person name="Deng J.M."/>
            <person name="Akiyama K."/>
            <person name="Ansari Y."/>
            <person name="Arakawa T."/>
            <person name="Banh J."/>
            <person name="Banno F."/>
            <person name="Bowser L."/>
            <person name="Brooks S.Y."/>
            <person name="Carninci P."/>
            <person name="Chao Q."/>
            <person name="Choy N."/>
            <person name="Enju A."/>
            <person name="Goldsmith A.D."/>
            <person name="Gurjal M."/>
            <person name="Hansen N.F."/>
            <person name="Hayashizaki Y."/>
            <person name="Johnson-Hopson C."/>
            <person name="Hsuan V.W."/>
            <person name="Iida K."/>
            <person name="Karnes M."/>
            <person name="Khan S."/>
            <person name="Koesema E."/>
            <person name="Ishida J."/>
            <person name="Jiang P.X."/>
            <person name="Jones T."/>
            <person name="Kawai J."/>
            <person name="Kamiya A."/>
            <person name="Meyers C."/>
            <person name="Nakajima M."/>
            <person name="Narusaka M."/>
            <person name="Seki M."/>
            <person name="Sakurai T."/>
            <person name="Satou M."/>
            <person name="Tamse R."/>
            <person name="Vaysberg M."/>
            <person name="Wallender E.K."/>
            <person name="Wong C."/>
            <person name="Yamamura Y."/>
            <person name="Yuan S."/>
            <person name="Shinozaki K."/>
            <person name="Davis R.W."/>
            <person name="Theologis A."/>
            <person name="Ecker J.R."/>
        </authorList>
    </citation>
    <scope>NUCLEOTIDE SEQUENCE [LARGE SCALE MRNA]</scope>
    <source>
        <strain>cv. Columbia</strain>
    </source>
</reference>
<reference key="5">
    <citation type="journal article" date="2009" name="Plant Cell">
        <title>The RPN5 subunit of the 26s proteasome is essential for gametogenesis, sporophyte development, and complex assembly in Arabidopsis.</title>
        <authorList>
            <person name="Book A.J."/>
            <person name="Smalle J."/>
            <person name="Lee K.H."/>
            <person name="Yang P."/>
            <person name="Walker J.M."/>
            <person name="Casper S."/>
            <person name="Holmes J.H."/>
            <person name="Russo L.A."/>
            <person name="Buzzinotti Z.W."/>
            <person name="Jenik P.D."/>
            <person name="Vierstra R.D."/>
        </authorList>
    </citation>
    <scope>DISRUPTION PHENOTYPE</scope>
    <scope>FUNCTION</scope>
    <scope>SUBCELLULAR LOCATION</scope>
</reference>
<reference key="6">
    <citation type="journal article" date="2010" name="J. Biol. Chem.">
        <title>Affinity purification of the Arabidopsis 26 S proteasome reveals a diverse array of plant proteolytic complexes.</title>
        <authorList>
            <person name="Book A.J."/>
            <person name="Gladman N.P."/>
            <person name="Lee S.S."/>
            <person name="Scalf M."/>
            <person name="Smith L.M."/>
            <person name="Vierstra R.D."/>
        </authorList>
    </citation>
    <scope>IDENTIFICATION BY MASS SPECTROMETRY</scope>
    <scope>CHARACTERIZATION OF THE 26S PROTEASOME COMPLEX</scope>
    <scope>SUBUNIT</scope>
</reference>